<feature type="chain" id="PRO_1000073435" description="Large ribosomal subunit protein bL17">
    <location>
        <begin position="1"/>
        <end position="139"/>
    </location>
</feature>
<feature type="region of interest" description="Disordered" evidence="2">
    <location>
        <begin position="120"/>
        <end position="139"/>
    </location>
</feature>
<keyword id="KW-1185">Reference proteome</keyword>
<keyword id="KW-0687">Ribonucleoprotein</keyword>
<keyword id="KW-0689">Ribosomal protein</keyword>
<protein>
    <recommendedName>
        <fullName evidence="1">Large ribosomal subunit protein bL17</fullName>
    </recommendedName>
    <alternativeName>
        <fullName evidence="3">50S ribosomal protein L17</fullName>
    </alternativeName>
</protein>
<accession>A7HWT6</accession>
<gene>
    <name evidence="1" type="primary">rplQ</name>
    <name type="ordered locus">Plav_2761</name>
</gene>
<proteinExistence type="inferred from homology"/>
<organism>
    <name type="scientific">Parvibaculum lavamentivorans (strain DS-1 / DSM 13023 / NCIMB 13966)</name>
    <dbReference type="NCBI Taxonomy" id="402881"/>
    <lineage>
        <taxon>Bacteria</taxon>
        <taxon>Pseudomonadati</taxon>
        <taxon>Pseudomonadota</taxon>
        <taxon>Alphaproteobacteria</taxon>
        <taxon>Hyphomicrobiales</taxon>
        <taxon>Parvibaculaceae</taxon>
        <taxon>Parvibaculum</taxon>
    </lineage>
</organism>
<evidence type="ECO:0000255" key="1">
    <source>
        <dbReference type="HAMAP-Rule" id="MF_01368"/>
    </source>
</evidence>
<evidence type="ECO:0000256" key="2">
    <source>
        <dbReference type="SAM" id="MobiDB-lite"/>
    </source>
</evidence>
<evidence type="ECO:0000305" key="3"/>
<comment type="subunit">
    <text evidence="1">Part of the 50S ribosomal subunit. Contacts protein L32.</text>
</comment>
<comment type="similarity">
    <text evidence="1">Belongs to the bacterial ribosomal protein bL17 family.</text>
</comment>
<name>RL17_PARL1</name>
<dbReference type="EMBL" id="CP000774">
    <property type="protein sequence ID" value="ABS64369.1"/>
    <property type="molecule type" value="Genomic_DNA"/>
</dbReference>
<dbReference type="RefSeq" id="WP_012111683.1">
    <property type="nucleotide sequence ID" value="NC_009719.1"/>
</dbReference>
<dbReference type="SMR" id="A7HWT6"/>
<dbReference type="STRING" id="402881.Plav_2761"/>
<dbReference type="KEGG" id="pla:Plav_2761"/>
<dbReference type="eggNOG" id="COG0203">
    <property type="taxonomic scope" value="Bacteria"/>
</dbReference>
<dbReference type="HOGENOM" id="CLU_074407_2_0_5"/>
<dbReference type="OrthoDB" id="9809073at2"/>
<dbReference type="Proteomes" id="UP000006377">
    <property type="component" value="Chromosome"/>
</dbReference>
<dbReference type="GO" id="GO:0022625">
    <property type="term" value="C:cytosolic large ribosomal subunit"/>
    <property type="evidence" value="ECO:0007669"/>
    <property type="project" value="TreeGrafter"/>
</dbReference>
<dbReference type="GO" id="GO:0003735">
    <property type="term" value="F:structural constituent of ribosome"/>
    <property type="evidence" value="ECO:0007669"/>
    <property type="project" value="InterPro"/>
</dbReference>
<dbReference type="GO" id="GO:0006412">
    <property type="term" value="P:translation"/>
    <property type="evidence" value="ECO:0007669"/>
    <property type="project" value="UniProtKB-UniRule"/>
</dbReference>
<dbReference type="FunFam" id="3.90.1030.10:FF:000001">
    <property type="entry name" value="50S ribosomal protein L17"/>
    <property type="match status" value="1"/>
</dbReference>
<dbReference type="Gene3D" id="3.90.1030.10">
    <property type="entry name" value="Ribosomal protein L17"/>
    <property type="match status" value="1"/>
</dbReference>
<dbReference type="HAMAP" id="MF_01368">
    <property type="entry name" value="Ribosomal_bL17"/>
    <property type="match status" value="1"/>
</dbReference>
<dbReference type="InterPro" id="IPR000456">
    <property type="entry name" value="Ribosomal_bL17"/>
</dbReference>
<dbReference type="InterPro" id="IPR047859">
    <property type="entry name" value="Ribosomal_bL17_CS"/>
</dbReference>
<dbReference type="InterPro" id="IPR036373">
    <property type="entry name" value="Ribosomal_bL17_sf"/>
</dbReference>
<dbReference type="NCBIfam" id="TIGR00059">
    <property type="entry name" value="L17"/>
    <property type="match status" value="1"/>
</dbReference>
<dbReference type="PANTHER" id="PTHR14413:SF16">
    <property type="entry name" value="LARGE RIBOSOMAL SUBUNIT PROTEIN BL17M"/>
    <property type="match status" value="1"/>
</dbReference>
<dbReference type="PANTHER" id="PTHR14413">
    <property type="entry name" value="RIBOSOMAL PROTEIN L17"/>
    <property type="match status" value="1"/>
</dbReference>
<dbReference type="Pfam" id="PF01196">
    <property type="entry name" value="Ribosomal_L17"/>
    <property type="match status" value="1"/>
</dbReference>
<dbReference type="SUPFAM" id="SSF64263">
    <property type="entry name" value="Prokaryotic ribosomal protein L17"/>
    <property type="match status" value="1"/>
</dbReference>
<dbReference type="PROSITE" id="PS01167">
    <property type="entry name" value="RIBOSOMAL_L17"/>
    <property type="match status" value="1"/>
</dbReference>
<sequence>MRHGNSGRKLNRTASHRKAMFANMAIALIKHEQIVTTLPKAKELRPYVEKLITLGKRGDLHARRQAYAALPDKVWAAKLFDVLGPRYQERQGGYIRVLKAGFRHGDSAPMAVIEFVDRDESAKGQDSGPVHVEGDEEAA</sequence>
<reference key="1">
    <citation type="journal article" date="2011" name="Stand. Genomic Sci.">
        <title>Complete genome sequence of Parvibaculum lavamentivorans type strain (DS-1(T)).</title>
        <authorList>
            <person name="Schleheck D."/>
            <person name="Weiss M."/>
            <person name="Pitluck S."/>
            <person name="Bruce D."/>
            <person name="Land M.L."/>
            <person name="Han S."/>
            <person name="Saunders E."/>
            <person name="Tapia R."/>
            <person name="Detter C."/>
            <person name="Brettin T."/>
            <person name="Han J."/>
            <person name="Woyke T."/>
            <person name="Goodwin L."/>
            <person name="Pennacchio L."/>
            <person name="Nolan M."/>
            <person name="Cook A.M."/>
            <person name="Kjelleberg S."/>
            <person name="Thomas T."/>
        </authorList>
    </citation>
    <scope>NUCLEOTIDE SEQUENCE [LARGE SCALE GENOMIC DNA]</scope>
    <source>
        <strain>DS-1 / DSM 13023 / NCIMB 13966</strain>
    </source>
</reference>